<comment type="function">
    <text evidence="1">Catalyzes the conversion of 2,6-dihydroxypyridine into 2,3,6-trihydroxypyridine in the nicotine degradation pathway.</text>
</comment>
<comment type="catalytic activity">
    <reaction evidence="1">
        <text>2,6-dihydroxypyridine + NADH + O2 + H(+) = 2,3,6-trihydroxypyridine + NAD(+) + H2O</text>
        <dbReference type="Rhea" id="RHEA:16917"/>
        <dbReference type="ChEBI" id="CHEBI:15377"/>
        <dbReference type="ChEBI" id="CHEBI:15378"/>
        <dbReference type="ChEBI" id="CHEBI:15379"/>
        <dbReference type="ChEBI" id="CHEBI:16683"/>
        <dbReference type="ChEBI" id="CHEBI:17681"/>
        <dbReference type="ChEBI" id="CHEBI:57540"/>
        <dbReference type="ChEBI" id="CHEBI:57945"/>
        <dbReference type="EC" id="1.14.13.10"/>
    </reaction>
</comment>
<comment type="cofactor">
    <cofactor evidence="1">
        <name>FAD</name>
        <dbReference type="ChEBI" id="CHEBI:57692"/>
    </cofactor>
</comment>
<comment type="biophysicochemical properties">
    <kinetics>
        <KM evidence="1">8.3E-6 M for 2,6-dihydroxypyridine</KM>
    </kinetics>
    <phDependence>
        <text evidence="1">Optimum pH is 8.0.</text>
    </phDependence>
    <temperatureDependence>
        <text evidence="1">Optimum temperature is 20 degrees Celsius.</text>
    </temperatureDependence>
</comment>
<comment type="pathway">
    <text evidence="1">Alkaloid degradation; nicotine degradation.</text>
</comment>
<comment type="subunit">
    <text evidence="1 2">Homodimer.</text>
</comment>
<organism>
    <name type="scientific">Paenarthrobacter nicotinovorans</name>
    <name type="common">Arthrobacter nicotinovorans</name>
    <dbReference type="NCBI Taxonomy" id="29320"/>
    <lineage>
        <taxon>Bacteria</taxon>
        <taxon>Bacillati</taxon>
        <taxon>Actinomycetota</taxon>
        <taxon>Actinomycetes</taxon>
        <taxon>Micrococcales</taxon>
        <taxon>Micrococcaceae</taxon>
        <taxon>Paenarthrobacter</taxon>
    </lineage>
</organism>
<geneLocation type="plasmid">
    <name>pAO1</name>
</geneLocation>
<dbReference type="EC" id="1.14.13.10"/>
<dbReference type="EMBL" id="AF373840">
    <property type="protein sequence ID" value="AAK64255.1"/>
    <property type="molecule type" value="Genomic_DNA"/>
</dbReference>
<dbReference type="EMBL" id="AJ507836">
    <property type="protein sequence ID" value="CAD47937.1"/>
    <property type="molecule type" value="Genomic_DNA"/>
</dbReference>
<dbReference type="RefSeq" id="WP_016359448.1">
    <property type="nucleotide sequence ID" value="NZ_JAGINZ010000002.1"/>
</dbReference>
<dbReference type="RefSeq" id="YP_007988763.1">
    <property type="nucleotide sequence ID" value="NC_021229.1"/>
</dbReference>
<dbReference type="PDB" id="2VOU">
    <property type="method" value="X-ray"/>
    <property type="resolution" value="2.60 A"/>
    <property type="chains" value="A/B/C=1-397"/>
</dbReference>
<dbReference type="PDBsum" id="2VOU"/>
<dbReference type="SMR" id="Q93NG3"/>
<dbReference type="GeneID" id="84020282"/>
<dbReference type="KEGG" id="ag:AAK64255"/>
<dbReference type="BioCyc" id="MetaCyc:MONOMER-1001"/>
<dbReference type="BRENDA" id="1.14.13.10">
    <property type="organism ID" value="449"/>
</dbReference>
<dbReference type="SABIO-RK" id="Q93NG3"/>
<dbReference type="UniPathway" id="UPA00106"/>
<dbReference type="EvolutionaryTrace" id="Q93NG3"/>
<dbReference type="GO" id="GO:0018663">
    <property type="term" value="F:2,6-dihydroxypyridine 3-monooxygenase activity"/>
    <property type="evidence" value="ECO:0000314"/>
    <property type="project" value="UniProtKB"/>
</dbReference>
<dbReference type="GO" id="GO:0071949">
    <property type="term" value="F:FAD binding"/>
    <property type="evidence" value="ECO:0007669"/>
    <property type="project" value="InterPro"/>
</dbReference>
<dbReference type="GO" id="GO:0050660">
    <property type="term" value="F:flavin adenine dinucleotide binding"/>
    <property type="evidence" value="ECO:0000314"/>
    <property type="project" value="UniProtKB"/>
</dbReference>
<dbReference type="GO" id="GO:0042803">
    <property type="term" value="F:protein homodimerization activity"/>
    <property type="evidence" value="ECO:0000314"/>
    <property type="project" value="UniProtKB"/>
</dbReference>
<dbReference type="GO" id="GO:0019608">
    <property type="term" value="P:nicotine catabolic process"/>
    <property type="evidence" value="ECO:0000314"/>
    <property type="project" value="UniProtKB"/>
</dbReference>
<dbReference type="Gene3D" id="3.50.50.60">
    <property type="entry name" value="FAD/NAD(P)-binding domain"/>
    <property type="match status" value="2"/>
</dbReference>
<dbReference type="InterPro" id="IPR053212">
    <property type="entry name" value="DHP_3-monooxygenase"/>
</dbReference>
<dbReference type="InterPro" id="IPR054707">
    <property type="entry name" value="DhpH_subs-bd"/>
</dbReference>
<dbReference type="InterPro" id="IPR002938">
    <property type="entry name" value="FAD-bd"/>
</dbReference>
<dbReference type="InterPro" id="IPR036188">
    <property type="entry name" value="FAD/NAD-bd_sf"/>
</dbReference>
<dbReference type="NCBIfam" id="NF005566">
    <property type="entry name" value="PRK07236.1"/>
    <property type="match status" value="1"/>
</dbReference>
<dbReference type="PANTHER" id="PTHR47469">
    <property type="entry name" value="MONOOXYGENASE-LIKE"/>
    <property type="match status" value="1"/>
</dbReference>
<dbReference type="PANTHER" id="PTHR47469:SF2">
    <property type="entry name" value="OS06G0597600 PROTEIN"/>
    <property type="match status" value="1"/>
</dbReference>
<dbReference type="Pfam" id="PF22607">
    <property type="entry name" value="FAD_binding-like"/>
    <property type="match status" value="1"/>
</dbReference>
<dbReference type="Pfam" id="PF01494">
    <property type="entry name" value="FAD_binding_3"/>
    <property type="match status" value="1"/>
</dbReference>
<dbReference type="PRINTS" id="PR00420">
    <property type="entry name" value="RNGMNOXGNASE"/>
</dbReference>
<dbReference type="SUPFAM" id="SSF54373">
    <property type="entry name" value="FAD-linked reductases, C-terminal domain"/>
    <property type="match status" value="1"/>
</dbReference>
<dbReference type="SUPFAM" id="SSF51905">
    <property type="entry name" value="FAD/NAD(P)-binding domain"/>
    <property type="match status" value="1"/>
</dbReference>
<feature type="chain" id="PRO_0000430255" description="2,6-dihydroxypyridine 3-monooxygenase">
    <location>
        <begin position="1"/>
        <end position="397"/>
    </location>
</feature>
<feature type="binding site" evidence="2">
    <location>
        <begin position="14"/>
        <end position="16"/>
    </location>
    <ligand>
        <name>FAD</name>
        <dbReference type="ChEBI" id="CHEBI:57692"/>
    </ligand>
</feature>
<feature type="binding site" evidence="2">
    <location>
        <begin position="35"/>
        <end position="36"/>
    </location>
    <ligand>
        <name>FAD</name>
        <dbReference type="ChEBI" id="CHEBI:57692"/>
    </ligand>
</feature>
<feature type="binding site" evidence="2">
    <location>
        <position position="49"/>
    </location>
    <ligand>
        <name>FAD</name>
        <dbReference type="ChEBI" id="CHEBI:57692"/>
    </ligand>
</feature>
<feature type="binding site" evidence="2">
    <location>
        <position position="120"/>
    </location>
    <ligand>
        <name>FAD</name>
        <dbReference type="ChEBI" id="CHEBI:57692"/>
    </ligand>
</feature>
<feature type="binding site" evidence="2">
    <location>
        <position position="306"/>
    </location>
    <ligand>
        <name>FAD</name>
        <dbReference type="ChEBI" id="CHEBI:57692"/>
    </ligand>
</feature>
<feature type="binding site" evidence="2">
    <location>
        <begin position="316"/>
        <end position="320"/>
    </location>
    <ligand>
        <name>FAD</name>
        <dbReference type="ChEBI" id="CHEBI:57692"/>
    </ligand>
</feature>
<feature type="mutagenesis site" description="Does not cause structural disturbance." evidence="2">
    <original>C</original>
    <variation>S</variation>
    <location>
        <position position="323"/>
    </location>
</feature>
<feature type="strand" evidence="3">
    <location>
        <begin position="6"/>
        <end position="11"/>
    </location>
</feature>
<feature type="helix" evidence="3">
    <location>
        <begin position="15"/>
        <end position="26"/>
    </location>
</feature>
<feature type="strand" evidence="3">
    <location>
        <begin position="30"/>
        <end position="34"/>
    </location>
</feature>
<feature type="strand" evidence="3">
    <location>
        <begin position="36"/>
        <end position="40"/>
    </location>
</feature>
<feature type="strand" evidence="3">
    <location>
        <begin position="47"/>
        <end position="49"/>
    </location>
</feature>
<feature type="helix" evidence="3">
    <location>
        <begin position="52"/>
        <end position="60"/>
    </location>
</feature>
<feature type="helix" evidence="3">
    <location>
        <begin position="65"/>
        <end position="67"/>
    </location>
</feature>
<feature type="strand" evidence="3">
    <location>
        <begin position="74"/>
        <end position="79"/>
    </location>
</feature>
<feature type="turn" evidence="3">
    <location>
        <begin position="80"/>
        <end position="82"/>
    </location>
</feature>
<feature type="strand" evidence="3">
    <location>
        <begin position="85"/>
        <end position="90"/>
    </location>
</feature>
<feature type="strand" evidence="3">
    <location>
        <begin position="95"/>
        <end position="97"/>
    </location>
</feature>
<feature type="helix" evidence="3">
    <location>
        <begin position="98"/>
        <end position="109"/>
    </location>
</feature>
<feature type="strand" evidence="3">
    <location>
        <begin position="120"/>
        <end position="125"/>
    </location>
</feature>
<feature type="strand" evidence="3">
    <location>
        <begin position="130"/>
        <end position="134"/>
    </location>
</feature>
<feature type="strand" evidence="3">
    <location>
        <begin position="139"/>
        <end position="147"/>
    </location>
</feature>
<feature type="helix" evidence="3">
    <location>
        <begin position="154"/>
        <end position="160"/>
    </location>
</feature>
<feature type="strand" evidence="3">
    <location>
        <begin position="165"/>
        <end position="176"/>
    </location>
</feature>
<feature type="helix" evidence="3">
    <location>
        <begin position="183"/>
        <end position="189"/>
    </location>
</feature>
<feature type="strand" evidence="3">
    <location>
        <begin position="192"/>
        <end position="198"/>
    </location>
</feature>
<feature type="strand" evidence="3">
    <location>
        <begin position="201"/>
        <end position="208"/>
    </location>
</feature>
<feature type="strand" evidence="3">
    <location>
        <begin position="218"/>
        <end position="226"/>
    </location>
</feature>
<feature type="helix" evidence="3">
    <location>
        <begin position="231"/>
        <end position="236"/>
    </location>
</feature>
<feature type="strand" evidence="3">
    <location>
        <begin position="246"/>
        <end position="249"/>
    </location>
</feature>
<feature type="helix" evidence="3">
    <location>
        <begin position="251"/>
        <end position="253"/>
    </location>
</feature>
<feature type="helix" evidence="3">
    <location>
        <begin position="256"/>
        <end position="266"/>
    </location>
</feature>
<feature type="helix" evidence="3">
    <location>
        <begin position="271"/>
        <end position="279"/>
    </location>
</feature>
<feature type="strand" evidence="3">
    <location>
        <begin position="284"/>
        <end position="291"/>
    </location>
</feature>
<feature type="strand" evidence="3">
    <location>
        <begin position="296"/>
        <end position="298"/>
    </location>
</feature>
<feature type="strand" evidence="3">
    <location>
        <begin position="301"/>
        <end position="303"/>
    </location>
</feature>
<feature type="helix" evidence="3">
    <location>
        <begin position="305"/>
        <end position="307"/>
    </location>
</feature>
<feature type="helix" evidence="3">
    <location>
        <begin position="313"/>
        <end position="315"/>
    </location>
</feature>
<feature type="helix" evidence="3">
    <location>
        <begin position="318"/>
        <end position="335"/>
    </location>
</feature>
<feature type="helix" evidence="3">
    <location>
        <begin position="339"/>
        <end position="368"/>
    </location>
</feature>
<feature type="turn" evidence="3">
    <location>
        <begin position="369"/>
        <end position="371"/>
    </location>
</feature>
<feature type="helix" evidence="3">
    <location>
        <begin position="379"/>
        <end position="381"/>
    </location>
</feature>
<feature type="strand" evidence="3">
    <location>
        <begin position="382"/>
        <end position="384"/>
    </location>
</feature>
<evidence type="ECO:0000269" key="1">
    <source>
    </source>
</evidence>
<evidence type="ECO:0000269" key="2">
    <source>
    </source>
</evidence>
<evidence type="ECO:0007829" key="3">
    <source>
        <dbReference type="PDB" id="2VOU"/>
    </source>
</evidence>
<keyword id="KW-0002">3D-structure</keyword>
<keyword id="KW-0274">FAD</keyword>
<keyword id="KW-0285">Flavoprotein</keyword>
<keyword id="KW-0520">NAD</keyword>
<keyword id="KW-0547">Nucleotide-binding</keyword>
<keyword id="KW-0560">Oxidoreductase</keyword>
<keyword id="KW-0614">Plasmid</keyword>
<accession>Q93NG3</accession>
<name>DHPH_PAENI</name>
<proteinExistence type="evidence at protein level"/>
<gene>
    <name type="primary">dhpH</name>
</gene>
<protein>
    <recommendedName>
        <fullName>2,6-dihydroxypyridine 3-monooxygenase</fullName>
        <shortName>2,6-DHPH</shortName>
        <ecNumber>1.14.13.10</ecNumber>
    </recommendedName>
</protein>
<reference key="1">
    <citation type="journal article" date="2001" name="J. Bacteriol.">
        <title>Gene cluster on pAO1 of Arthrobacter nicotinovorans involved in degradation of the plant alkaloid nicotine: cloning, purification, and characterization of 2,6-dihydroxypyridine 3-hydroxylase.</title>
        <authorList>
            <person name="Baitsch D."/>
            <person name="Sandu C."/>
            <person name="Brandsch R."/>
            <person name="Igloi G.L."/>
        </authorList>
    </citation>
    <scope>NUCLEOTIDE SEQUENCE [GENOMIC DNA]</scope>
    <scope>FUNCTION</scope>
    <scope>CATALYTIC ACTIVITY</scope>
    <scope>COFACTOR</scope>
    <scope>SUBUNIT</scope>
    <scope>BIOPHYSICOCHEMICAL PROPERTIES</scope>
    <scope>PATHWAY</scope>
    <source>
        <strain>ATCC 49919 / DSM 420 / JCM 3874 / KCTC 9902 / LMG 16253 / NBRC 15511</strain>
        <plasmid>pAO1</plasmid>
    </source>
</reference>
<reference key="2">
    <citation type="journal article" date="2003" name="J. Bacteriol.">
        <title>Sequence of the 165-kilobase catabolic plasmid pAO1 from Arthrobacter nicotinovorans and identification of a pAO1-dependent nicotine uptake system.</title>
        <authorList>
            <person name="Igloi G.L."/>
            <person name="Brandsch R."/>
        </authorList>
    </citation>
    <scope>NUCLEOTIDE SEQUENCE [GENOMIC DNA]</scope>
    <source>
        <strain>ATCC 49919 / DSM 420 / JCM 3874 / KCTC 9902 / LMG 16253 / NBRC 15511</strain>
        <plasmid>pAO1</plasmid>
    </source>
</reference>
<reference key="3">
    <citation type="journal article" date="2014" name="PLoS ONE">
        <title>Finding sequences for over 270 orphan enzymes.</title>
        <authorList>
            <person name="Shearer A.G."/>
            <person name="Altman T."/>
            <person name="Rhee C.D."/>
        </authorList>
    </citation>
    <scope>IDENTIFICATION</scope>
</reference>
<reference key="4">
    <citation type="journal article" date="2008" name="J. Mol. Biol.">
        <title>Structure of 2,6-dihydroxypyridine 3-hydroxylase from a nicotine-degrading pathway.</title>
        <authorList>
            <person name="Treiber N."/>
            <person name="Schulz G.E."/>
        </authorList>
    </citation>
    <scope>X-RAY CRYSTALLOGRAPHY (2.60 ANGSTROMS) IN COMPLEX WITH FAD</scope>
    <scope>MUTAGENESIS OF CYS-323</scope>
</reference>
<sequence length="397" mass="43400">MSPTTDRIAVVGGSISGLTAALMLRDAGVDVDVYERSPQPLSGFGTGIVVQPELVHYLLEQGVELDSISVPSSSMEYVDALTGERVGSVPADWRFTSYDSIYGGLYELFGPERYHTSKCLVGLSQDSETVQMRFSDGTKAEANWVIGADGGASVVRKRLLGIEPTYAGYVTWRGVLQPGEVADDVWNYFNDKFTYGLLDDGHLIAYPIPGRENAESPRLNFQWYWNVAEGPDLDELMTDVRGIRLPTSVHNNSLNPHNLRQFHSKGESLFKPFRDLVLNASSPFVTVVADATVDRMVHGRVLLIGDAAVTPRPHAAAGGAKACDDARTLAEVFTKNHDLRGSLQSWETRQLQQGHAYLNKVKKMASRLQHGGSFEPGNPAFAFGLPKVDEPSVVTNS</sequence>